<feature type="chain" id="PRO_0000189469" description="2-C-methyl-D-erythritol 2,4-cyclodiphosphate synthase">
    <location>
        <begin position="1"/>
        <end position="160"/>
    </location>
</feature>
<feature type="binding site" evidence="1">
    <location>
        <begin position="9"/>
        <end position="11"/>
    </location>
    <ligand>
        <name>4-CDP-2-C-methyl-D-erythritol 2-phosphate</name>
        <dbReference type="ChEBI" id="CHEBI:57919"/>
    </ligand>
</feature>
<feature type="binding site" evidence="1">
    <location>
        <position position="9"/>
    </location>
    <ligand>
        <name>a divalent metal cation</name>
        <dbReference type="ChEBI" id="CHEBI:60240"/>
    </ligand>
</feature>
<feature type="binding site" evidence="1">
    <location>
        <position position="11"/>
    </location>
    <ligand>
        <name>a divalent metal cation</name>
        <dbReference type="ChEBI" id="CHEBI:60240"/>
    </ligand>
</feature>
<feature type="binding site" evidence="1">
    <location>
        <begin position="35"/>
        <end position="36"/>
    </location>
    <ligand>
        <name>4-CDP-2-C-methyl-D-erythritol 2-phosphate</name>
        <dbReference type="ChEBI" id="CHEBI:57919"/>
    </ligand>
</feature>
<feature type="binding site" evidence="1">
    <location>
        <position position="43"/>
    </location>
    <ligand>
        <name>a divalent metal cation</name>
        <dbReference type="ChEBI" id="CHEBI:60240"/>
    </ligand>
</feature>
<feature type="binding site" evidence="1">
    <location>
        <begin position="57"/>
        <end position="59"/>
    </location>
    <ligand>
        <name>4-CDP-2-C-methyl-D-erythritol 2-phosphate</name>
        <dbReference type="ChEBI" id="CHEBI:57919"/>
    </ligand>
</feature>
<feature type="binding site" evidence="1">
    <location>
        <begin position="62"/>
        <end position="66"/>
    </location>
    <ligand>
        <name>4-CDP-2-C-methyl-D-erythritol 2-phosphate</name>
        <dbReference type="ChEBI" id="CHEBI:57919"/>
    </ligand>
</feature>
<feature type="binding site" evidence="1">
    <location>
        <position position="140"/>
    </location>
    <ligand>
        <name>4-CDP-2-C-methyl-D-erythritol 2-phosphate</name>
        <dbReference type="ChEBI" id="CHEBI:57919"/>
    </ligand>
</feature>
<feature type="site" description="Transition state stabilizer" evidence="1">
    <location>
        <position position="35"/>
    </location>
</feature>
<feature type="site" description="Transition state stabilizer" evidence="1">
    <location>
        <position position="134"/>
    </location>
</feature>
<keyword id="KW-0414">Isoprene biosynthesis</keyword>
<keyword id="KW-0456">Lyase</keyword>
<keyword id="KW-0479">Metal-binding</keyword>
<keyword id="KW-1185">Reference proteome</keyword>
<proteinExistence type="inferred from homology"/>
<comment type="function">
    <text evidence="1">Involved in the biosynthesis of isopentenyl diphosphate (IPP) and dimethylallyl diphosphate (DMAPP), two major building blocks of isoprenoid compounds. Catalyzes the conversion of 4-diphosphocytidyl-2-C-methyl-D-erythritol 2-phosphate (CDP-ME2P) to 2-C-methyl-D-erythritol 2,4-cyclodiphosphate (ME-CPP) with a corresponding release of cytidine 5-monophosphate (CMP).</text>
</comment>
<comment type="catalytic activity">
    <reaction evidence="1">
        <text>4-CDP-2-C-methyl-D-erythritol 2-phosphate = 2-C-methyl-D-erythritol 2,4-cyclic diphosphate + CMP</text>
        <dbReference type="Rhea" id="RHEA:23864"/>
        <dbReference type="ChEBI" id="CHEBI:57919"/>
        <dbReference type="ChEBI" id="CHEBI:58483"/>
        <dbReference type="ChEBI" id="CHEBI:60377"/>
        <dbReference type="EC" id="4.6.1.12"/>
    </reaction>
</comment>
<comment type="cofactor">
    <cofactor evidence="1">
        <name>a divalent metal cation</name>
        <dbReference type="ChEBI" id="CHEBI:60240"/>
    </cofactor>
    <text evidence="1">Binds 1 divalent metal cation per subunit.</text>
</comment>
<comment type="pathway">
    <text evidence="1">Isoprenoid biosynthesis; isopentenyl diphosphate biosynthesis via DXP pathway; isopentenyl diphosphate from 1-deoxy-D-xylulose 5-phosphate: step 4/6.</text>
</comment>
<comment type="subunit">
    <text evidence="1">Homotrimer.</text>
</comment>
<comment type="similarity">
    <text evidence="1">Belongs to the IspF family.</text>
</comment>
<dbReference type="EC" id="4.6.1.12" evidence="1"/>
<dbReference type="EMBL" id="AE009951">
    <property type="protein sequence ID" value="AAL93887.1"/>
    <property type="molecule type" value="Genomic_DNA"/>
</dbReference>
<dbReference type="RefSeq" id="NP_602588.1">
    <property type="nucleotide sequence ID" value="NC_003454.1"/>
</dbReference>
<dbReference type="RefSeq" id="WP_011015827.1">
    <property type="nucleotide sequence ID" value="NZ_OZ209243.1"/>
</dbReference>
<dbReference type="SMR" id="Q8R6E7"/>
<dbReference type="FunCoup" id="Q8R6E7">
    <property type="interactions" value="304"/>
</dbReference>
<dbReference type="STRING" id="190304.FN1788"/>
<dbReference type="PaxDb" id="190304-FN1788"/>
<dbReference type="EnsemblBacteria" id="AAL93887">
    <property type="protein sequence ID" value="AAL93887"/>
    <property type="gene ID" value="FN1788"/>
</dbReference>
<dbReference type="GeneID" id="79782716"/>
<dbReference type="KEGG" id="fnu:FN1788"/>
<dbReference type="PATRIC" id="fig|190304.8.peg.262"/>
<dbReference type="eggNOG" id="COG0245">
    <property type="taxonomic scope" value="Bacteria"/>
</dbReference>
<dbReference type="HOGENOM" id="CLU_084630_2_0_0"/>
<dbReference type="InParanoid" id="Q8R6E7"/>
<dbReference type="BioCyc" id="FNUC190304:G1FZS-286-MONOMER"/>
<dbReference type="UniPathway" id="UPA00056">
    <property type="reaction ID" value="UER00095"/>
</dbReference>
<dbReference type="Proteomes" id="UP000002521">
    <property type="component" value="Chromosome"/>
</dbReference>
<dbReference type="GO" id="GO:0008685">
    <property type="term" value="F:2-C-methyl-D-erythritol 2,4-cyclodiphosphate synthase activity"/>
    <property type="evidence" value="ECO:0000318"/>
    <property type="project" value="GO_Central"/>
</dbReference>
<dbReference type="GO" id="GO:0046872">
    <property type="term" value="F:metal ion binding"/>
    <property type="evidence" value="ECO:0007669"/>
    <property type="project" value="UniProtKB-KW"/>
</dbReference>
<dbReference type="GO" id="GO:0019288">
    <property type="term" value="P:isopentenyl diphosphate biosynthetic process, methylerythritol 4-phosphate pathway"/>
    <property type="evidence" value="ECO:0007669"/>
    <property type="project" value="UniProtKB-UniRule"/>
</dbReference>
<dbReference type="GO" id="GO:0016114">
    <property type="term" value="P:terpenoid biosynthetic process"/>
    <property type="evidence" value="ECO:0007669"/>
    <property type="project" value="InterPro"/>
</dbReference>
<dbReference type="CDD" id="cd00554">
    <property type="entry name" value="MECDP_synthase"/>
    <property type="match status" value="1"/>
</dbReference>
<dbReference type="FunFam" id="3.30.1330.50:FF:000001">
    <property type="entry name" value="2-C-methyl-D-erythritol 2,4-cyclodiphosphate synthase"/>
    <property type="match status" value="1"/>
</dbReference>
<dbReference type="Gene3D" id="3.30.1330.50">
    <property type="entry name" value="2-C-methyl-D-erythritol 2,4-cyclodiphosphate synthase"/>
    <property type="match status" value="1"/>
</dbReference>
<dbReference type="HAMAP" id="MF_00107">
    <property type="entry name" value="IspF"/>
    <property type="match status" value="1"/>
</dbReference>
<dbReference type="InterPro" id="IPR003526">
    <property type="entry name" value="MECDP_synthase"/>
</dbReference>
<dbReference type="InterPro" id="IPR020555">
    <property type="entry name" value="MECDP_synthase_CS"/>
</dbReference>
<dbReference type="InterPro" id="IPR036571">
    <property type="entry name" value="MECDP_synthase_sf"/>
</dbReference>
<dbReference type="NCBIfam" id="TIGR00151">
    <property type="entry name" value="ispF"/>
    <property type="match status" value="1"/>
</dbReference>
<dbReference type="PANTHER" id="PTHR43181">
    <property type="entry name" value="2-C-METHYL-D-ERYTHRITOL 2,4-CYCLODIPHOSPHATE SYNTHASE, CHLOROPLASTIC"/>
    <property type="match status" value="1"/>
</dbReference>
<dbReference type="PANTHER" id="PTHR43181:SF1">
    <property type="entry name" value="2-C-METHYL-D-ERYTHRITOL 2,4-CYCLODIPHOSPHATE SYNTHASE, CHLOROPLASTIC"/>
    <property type="match status" value="1"/>
</dbReference>
<dbReference type="Pfam" id="PF02542">
    <property type="entry name" value="YgbB"/>
    <property type="match status" value="1"/>
</dbReference>
<dbReference type="SUPFAM" id="SSF69765">
    <property type="entry name" value="IpsF-like"/>
    <property type="match status" value="1"/>
</dbReference>
<dbReference type="PROSITE" id="PS01350">
    <property type="entry name" value="ISPF"/>
    <property type="match status" value="1"/>
</dbReference>
<reference key="1">
    <citation type="journal article" date="2002" name="J. Bacteriol.">
        <title>Genome sequence and analysis of the oral bacterium Fusobacterium nucleatum strain ATCC 25586.</title>
        <authorList>
            <person name="Kapatral V."/>
            <person name="Anderson I."/>
            <person name="Ivanova N."/>
            <person name="Reznik G."/>
            <person name="Los T."/>
            <person name="Lykidis A."/>
            <person name="Bhattacharyya A."/>
            <person name="Bartman A."/>
            <person name="Gardner W."/>
            <person name="Grechkin G."/>
            <person name="Zhu L."/>
            <person name="Vasieva O."/>
            <person name="Chu L."/>
            <person name="Kogan Y."/>
            <person name="Chaga O."/>
            <person name="Goltsman E."/>
            <person name="Bernal A."/>
            <person name="Larsen N."/>
            <person name="D'Souza M."/>
            <person name="Walunas T."/>
            <person name="Pusch G."/>
            <person name="Haselkorn R."/>
            <person name="Fonstein M."/>
            <person name="Kyrpides N.C."/>
            <person name="Overbeek R."/>
        </authorList>
    </citation>
    <scope>NUCLEOTIDE SEQUENCE [LARGE SCALE GENOMIC DNA]</scope>
    <source>
        <strain>ATCC 25586 / DSM 15643 / BCRC 10681 / CIP 101130 / JCM 8532 / KCTC 2640 / LMG 13131 / VPI 4355</strain>
    </source>
</reference>
<organism>
    <name type="scientific">Fusobacterium nucleatum subsp. nucleatum (strain ATCC 25586 / DSM 15643 / BCRC 10681 / CIP 101130 / JCM 8532 / KCTC 2640 / LMG 13131 / VPI 4355)</name>
    <dbReference type="NCBI Taxonomy" id="190304"/>
    <lineage>
        <taxon>Bacteria</taxon>
        <taxon>Fusobacteriati</taxon>
        <taxon>Fusobacteriota</taxon>
        <taxon>Fusobacteriia</taxon>
        <taxon>Fusobacteriales</taxon>
        <taxon>Fusobacteriaceae</taxon>
        <taxon>Fusobacterium</taxon>
    </lineage>
</organism>
<protein>
    <recommendedName>
        <fullName evidence="1">2-C-methyl-D-erythritol 2,4-cyclodiphosphate synthase</fullName>
        <shortName evidence="1">MECDP-synthase</shortName>
        <shortName evidence="1">MECPP-synthase</shortName>
        <shortName evidence="1">MECPS</shortName>
        <ecNumber evidence="1">4.6.1.12</ecNumber>
    </recommendedName>
</protein>
<gene>
    <name evidence="1" type="primary">ispF</name>
    <name type="ordered locus">FN1788</name>
</gene>
<name>ISPF_FUSNN</name>
<accession>Q8R6E7</accession>
<evidence type="ECO:0000255" key="1">
    <source>
        <dbReference type="HAMAP-Rule" id="MF_00107"/>
    </source>
</evidence>
<sequence length="160" mass="17687">MLRIGNGYDVHKLVEGRKLMLGGVEVPHTKGVLGHSDGDVLLHAITDAIIGALGLGDIGLHFPDNDENLKDIDSAILLKKINNIMKEKNYKIVNLDSIIVMQKPKLRPYIDSIRDNIAKILEINSELINVKAKTEEKLGFTGDETGVKSYCVVLLEKKKC</sequence>